<protein>
    <recommendedName>
        <fullName evidence="1">Enolase</fullName>
        <ecNumber evidence="1">4.2.1.11</ecNumber>
    </recommendedName>
    <alternativeName>
        <fullName evidence="1">2-phospho-D-glycerate hydro-lyase</fullName>
    </alternativeName>
    <alternativeName>
        <fullName evidence="1">2-phosphoglycerate dehydratase</fullName>
    </alternativeName>
</protein>
<proteinExistence type="inferred from homology"/>
<feature type="chain" id="PRO_0000267103" description="Enolase">
    <location>
        <begin position="1"/>
        <end position="431"/>
    </location>
</feature>
<feature type="active site" description="Proton donor" evidence="1">
    <location>
        <position position="209"/>
    </location>
</feature>
<feature type="active site" description="Proton acceptor" evidence="1">
    <location>
        <position position="341"/>
    </location>
</feature>
<feature type="binding site" evidence="1">
    <location>
        <position position="167"/>
    </location>
    <ligand>
        <name>(2R)-2-phosphoglycerate</name>
        <dbReference type="ChEBI" id="CHEBI:58289"/>
    </ligand>
</feature>
<feature type="binding site" evidence="1">
    <location>
        <position position="246"/>
    </location>
    <ligand>
        <name>Mg(2+)</name>
        <dbReference type="ChEBI" id="CHEBI:18420"/>
    </ligand>
</feature>
<feature type="binding site" evidence="1">
    <location>
        <position position="289"/>
    </location>
    <ligand>
        <name>Mg(2+)</name>
        <dbReference type="ChEBI" id="CHEBI:18420"/>
    </ligand>
</feature>
<feature type="binding site" evidence="1">
    <location>
        <position position="316"/>
    </location>
    <ligand>
        <name>Mg(2+)</name>
        <dbReference type="ChEBI" id="CHEBI:18420"/>
    </ligand>
</feature>
<feature type="binding site" evidence="1">
    <location>
        <position position="341"/>
    </location>
    <ligand>
        <name>(2R)-2-phosphoglycerate</name>
        <dbReference type="ChEBI" id="CHEBI:58289"/>
    </ligand>
</feature>
<feature type="binding site" evidence="1">
    <location>
        <position position="370"/>
    </location>
    <ligand>
        <name>(2R)-2-phosphoglycerate</name>
        <dbReference type="ChEBI" id="CHEBI:58289"/>
    </ligand>
</feature>
<feature type="binding site" evidence="1">
    <location>
        <position position="371"/>
    </location>
    <ligand>
        <name>(2R)-2-phosphoglycerate</name>
        <dbReference type="ChEBI" id="CHEBI:58289"/>
    </ligand>
</feature>
<feature type="binding site" evidence="1">
    <location>
        <position position="392"/>
    </location>
    <ligand>
        <name>(2R)-2-phosphoglycerate</name>
        <dbReference type="ChEBI" id="CHEBI:58289"/>
    </ligand>
</feature>
<organism>
    <name type="scientific">Shewanella sp. (strain MR-7)</name>
    <dbReference type="NCBI Taxonomy" id="60481"/>
    <lineage>
        <taxon>Bacteria</taxon>
        <taxon>Pseudomonadati</taxon>
        <taxon>Pseudomonadota</taxon>
        <taxon>Gammaproteobacteria</taxon>
        <taxon>Alteromonadales</taxon>
        <taxon>Shewanellaceae</taxon>
        <taxon>Shewanella</taxon>
    </lineage>
</organism>
<dbReference type="EC" id="4.2.1.11" evidence="1"/>
<dbReference type="EMBL" id="CP000444">
    <property type="protein sequence ID" value="ABI42185.1"/>
    <property type="molecule type" value="Genomic_DNA"/>
</dbReference>
<dbReference type="SMR" id="Q0HXH0"/>
<dbReference type="KEGG" id="shm:Shewmr7_1186"/>
<dbReference type="HOGENOM" id="CLU_031223_2_1_6"/>
<dbReference type="UniPathway" id="UPA00109">
    <property type="reaction ID" value="UER00187"/>
</dbReference>
<dbReference type="GO" id="GO:0009986">
    <property type="term" value="C:cell surface"/>
    <property type="evidence" value="ECO:0007669"/>
    <property type="project" value="UniProtKB-SubCell"/>
</dbReference>
<dbReference type="GO" id="GO:0005576">
    <property type="term" value="C:extracellular region"/>
    <property type="evidence" value="ECO:0007669"/>
    <property type="project" value="UniProtKB-SubCell"/>
</dbReference>
<dbReference type="GO" id="GO:0000015">
    <property type="term" value="C:phosphopyruvate hydratase complex"/>
    <property type="evidence" value="ECO:0007669"/>
    <property type="project" value="InterPro"/>
</dbReference>
<dbReference type="GO" id="GO:0000287">
    <property type="term" value="F:magnesium ion binding"/>
    <property type="evidence" value="ECO:0007669"/>
    <property type="project" value="UniProtKB-UniRule"/>
</dbReference>
<dbReference type="GO" id="GO:0004634">
    <property type="term" value="F:phosphopyruvate hydratase activity"/>
    <property type="evidence" value="ECO:0007669"/>
    <property type="project" value="UniProtKB-UniRule"/>
</dbReference>
<dbReference type="GO" id="GO:0006096">
    <property type="term" value="P:glycolytic process"/>
    <property type="evidence" value="ECO:0007669"/>
    <property type="project" value="UniProtKB-UniRule"/>
</dbReference>
<dbReference type="CDD" id="cd03313">
    <property type="entry name" value="enolase"/>
    <property type="match status" value="1"/>
</dbReference>
<dbReference type="FunFam" id="3.20.20.120:FF:000001">
    <property type="entry name" value="Enolase"/>
    <property type="match status" value="1"/>
</dbReference>
<dbReference type="FunFam" id="3.30.390.10:FF:000001">
    <property type="entry name" value="Enolase"/>
    <property type="match status" value="1"/>
</dbReference>
<dbReference type="Gene3D" id="3.20.20.120">
    <property type="entry name" value="Enolase-like C-terminal domain"/>
    <property type="match status" value="1"/>
</dbReference>
<dbReference type="Gene3D" id="3.30.390.10">
    <property type="entry name" value="Enolase-like, N-terminal domain"/>
    <property type="match status" value="1"/>
</dbReference>
<dbReference type="HAMAP" id="MF_00318">
    <property type="entry name" value="Enolase"/>
    <property type="match status" value="1"/>
</dbReference>
<dbReference type="InterPro" id="IPR000941">
    <property type="entry name" value="Enolase"/>
</dbReference>
<dbReference type="InterPro" id="IPR036849">
    <property type="entry name" value="Enolase-like_C_sf"/>
</dbReference>
<dbReference type="InterPro" id="IPR029017">
    <property type="entry name" value="Enolase-like_N"/>
</dbReference>
<dbReference type="InterPro" id="IPR020810">
    <property type="entry name" value="Enolase_C"/>
</dbReference>
<dbReference type="InterPro" id="IPR020809">
    <property type="entry name" value="Enolase_CS"/>
</dbReference>
<dbReference type="InterPro" id="IPR020811">
    <property type="entry name" value="Enolase_N"/>
</dbReference>
<dbReference type="NCBIfam" id="TIGR01060">
    <property type="entry name" value="eno"/>
    <property type="match status" value="1"/>
</dbReference>
<dbReference type="PANTHER" id="PTHR11902">
    <property type="entry name" value="ENOLASE"/>
    <property type="match status" value="1"/>
</dbReference>
<dbReference type="PANTHER" id="PTHR11902:SF1">
    <property type="entry name" value="ENOLASE"/>
    <property type="match status" value="1"/>
</dbReference>
<dbReference type="Pfam" id="PF00113">
    <property type="entry name" value="Enolase_C"/>
    <property type="match status" value="1"/>
</dbReference>
<dbReference type="Pfam" id="PF03952">
    <property type="entry name" value="Enolase_N"/>
    <property type="match status" value="1"/>
</dbReference>
<dbReference type="PIRSF" id="PIRSF001400">
    <property type="entry name" value="Enolase"/>
    <property type="match status" value="1"/>
</dbReference>
<dbReference type="PRINTS" id="PR00148">
    <property type="entry name" value="ENOLASE"/>
</dbReference>
<dbReference type="SFLD" id="SFLDF00002">
    <property type="entry name" value="enolase"/>
    <property type="match status" value="1"/>
</dbReference>
<dbReference type="SFLD" id="SFLDG00178">
    <property type="entry name" value="enolase"/>
    <property type="match status" value="1"/>
</dbReference>
<dbReference type="SMART" id="SM01192">
    <property type="entry name" value="Enolase_C"/>
    <property type="match status" value="1"/>
</dbReference>
<dbReference type="SMART" id="SM01193">
    <property type="entry name" value="Enolase_N"/>
    <property type="match status" value="1"/>
</dbReference>
<dbReference type="SUPFAM" id="SSF51604">
    <property type="entry name" value="Enolase C-terminal domain-like"/>
    <property type="match status" value="1"/>
</dbReference>
<dbReference type="SUPFAM" id="SSF54826">
    <property type="entry name" value="Enolase N-terminal domain-like"/>
    <property type="match status" value="1"/>
</dbReference>
<dbReference type="PROSITE" id="PS00164">
    <property type="entry name" value="ENOLASE"/>
    <property type="match status" value="1"/>
</dbReference>
<comment type="function">
    <text evidence="1">Catalyzes the reversible conversion of 2-phosphoglycerate (2-PG) into phosphoenolpyruvate (PEP). It is essential for the degradation of carbohydrates via glycolysis.</text>
</comment>
<comment type="catalytic activity">
    <reaction evidence="1">
        <text>(2R)-2-phosphoglycerate = phosphoenolpyruvate + H2O</text>
        <dbReference type="Rhea" id="RHEA:10164"/>
        <dbReference type="ChEBI" id="CHEBI:15377"/>
        <dbReference type="ChEBI" id="CHEBI:58289"/>
        <dbReference type="ChEBI" id="CHEBI:58702"/>
        <dbReference type="EC" id="4.2.1.11"/>
    </reaction>
</comment>
<comment type="cofactor">
    <cofactor evidence="1">
        <name>Mg(2+)</name>
        <dbReference type="ChEBI" id="CHEBI:18420"/>
    </cofactor>
    <text evidence="1">Binds a second Mg(2+) ion via substrate during catalysis.</text>
</comment>
<comment type="pathway">
    <text evidence="1">Carbohydrate degradation; glycolysis; pyruvate from D-glyceraldehyde 3-phosphate: step 4/5.</text>
</comment>
<comment type="subunit">
    <text evidence="1">Component of the RNA degradosome, a multiprotein complex involved in RNA processing and mRNA degradation.</text>
</comment>
<comment type="subcellular location">
    <subcellularLocation>
        <location evidence="1">Cytoplasm</location>
    </subcellularLocation>
    <subcellularLocation>
        <location evidence="1">Secreted</location>
    </subcellularLocation>
    <subcellularLocation>
        <location evidence="1">Cell surface</location>
    </subcellularLocation>
    <text evidence="1">Fractions of enolase are present in both the cytoplasm and on the cell surface.</text>
</comment>
<comment type="similarity">
    <text evidence="1">Belongs to the enolase family.</text>
</comment>
<evidence type="ECO:0000255" key="1">
    <source>
        <dbReference type="HAMAP-Rule" id="MF_00318"/>
    </source>
</evidence>
<keyword id="KW-0963">Cytoplasm</keyword>
<keyword id="KW-0324">Glycolysis</keyword>
<keyword id="KW-0456">Lyase</keyword>
<keyword id="KW-0460">Magnesium</keyword>
<keyword id="KW-0479">Metal-binding</keyword>
<keyword id="KW-0964">Secreted</keyword>
<reference key="1">
    <citation type="submission" date="2006-08" db="EMBL/GenBank/DDBJ databases">
        <title>Complete sequence of chromosome 1 of Shewanella sp. MR-7.</title>
        <authorList>
            <person name="Copeland A."/>
            <person name="Lucas S."/>
            <person name="Lapidus A."/>
            <person name="Barry K."/>
            <person name="Detter J.C."/>
            <person name="Glavina del Rio T."/>
            <person name="Hammon N."/>
            <person name="Israni S."/>
            <person name="Dalin E."/>
            <person name="Tice H."/>
            <person name="Pitluck S."/>
            <person name="Kiss H."/>
            <person name="Brettin T."/>
            <person name="Bruce D."/>
            <person name="Han C."/>
            <person name="Tapia R."/>
            <person name="Gilna P."/>
            <person name="Schmutz J."/>
            <person name="Larimer F."/>
            <person name="Land M."/>
            <person name="Hauser L."/>
            <person name="Kyrpides N."/>
            <person name="Mikhailova N."/>
            <person name="Nealson K."/>
            <person name="Konstantinidis K."/>
            <person name="Klappenbach J."/>
            <person name="Tiedje J."/>
            <person name="Richardson P."/>
        </authorList>
    </citation>
    <scope>NUCLEOTIDE SEQUENCE [LARGE SCALE GENOMIC DNA]</scope>
    <source>
        <strain>MR-7</strain>
    </source>
</reference>
<accession>Q0HXH0</accession>
<name>ENO_SHESR</name>
<sequence>MAKIINVIGREIMDSRGNPTVEAEVHLEGGFIGMAAAPSGASTGSREALELRDGDKSRYLGKGVLTAVANVNGPIRAALIGKDATAQAELDQIMIDLDGTENKDKLGANAILAVSLAAAKAAAAFKGMPLYAHIAELNGTPGQYAMPVPMMNILNGGEHADNNVDIQEFMVQPVGAKNFREALRMGAEIFHTLKKVLHGKGLSTSVGDEGGFAPNLSSNADALAVIKEAVELAGYKLGTDVTLALDCAASEFYKDGKYDLSGEGKVFDSNGFSDFLKSLTEQYPIVSIEDGLDESDWDGWAYQTKIMGDKIQLVGDDLFVTNTKILTRGIENGIANSILIKFNQIGSLTETLAAIRMAKAAGYTAVISHRSGETEDATIADLAVGTAAGQIKTGSLCRSDRVAKYNQLLRIEEQLGEKAPYRGLKEIKGQA</sequence>
<gene>
    <name evidence="1" type="primary">eno</name>
    <name type="ordered locus">Shewmr7_1186</name>
</gene>